<proteinExistence type="inferred from homology"/>
<sequence length="219" mass="24784">MTNNEKVINNKKSTDSSKLFRYQAKFVAGAMNINQIPNFLLPEIAFIGKSNVGKSSLINTICNNKNLAKVSNIPGRTGQINFFNLADKLIIVDLPGYGFANVPISVKEQWEVLISYYLRNSNNLRLVNLLIDSRRGIKENDKKVAELLLKNKRSFQIIFTKFDKVTDCKNLTDEAQNFLTTLHYSCNVMYVSSRSKEGARELKASLAKCIIKPQRSKGR</sequence>
<reference key="1">
    <citation type="submission" date="2007-09" db="EMBL/GenBank/DDBJ databases">
        <title>Complete genome sequence of Rickettsia canadensis.</title>
        <authorList>
            <person name="Madan A."/>
            <person name="Fahey J."/>
            <person name="Helton E."/>
            <person name="Ketteman M."/>
            <person name="Madan A."/>
            <person name="Rodrigues S."/>
            <person name="Sanchez A."/>
            <person name="Whiting M."/>
            <person name="Dasch G."/>
            <person name="Eremeeva M."/>
        </authorList>
    </citation>
    <scope>NUCLEOTIDE SEQUENCE [LARGE SCALE GENOMIC DNA]</scope>
    <source>
        <strain>McKiel</strain>
    </source>
</reference>
<organism>
    <name type="scientific">Rickettsia canadensis (strain McKiel)</name>
    <dbReference type="NCBI Taxonomy" id="293613"/>
    <lineage>
        <taxon>Bacteria</taxon>
        <taxon>Pseudomonadati</taxon>
        <taxon>Pseudomonadota</taxon>
        <taxon>Alphaproteobacteria</taxon>
        <taxon>Rickettsiales</taxon>
        <taxon>Rickettsiaceae</taxon>
        <taxon>Rickettsieae</taxon>
        <taxon>Rickettsia</taxon>
        <taxon>belli group</taxon>
    </lineage>
</organism>
<keyword id="KW-0131">Cell cycle</keyword>
<keyword id="KW-0132">Cell division</keyword>
<keyword id="KW-0342">GTP-binding</keyword>
<keyword id="KW-0460">Magnesium</keyword>
<keyword id="KW-0479">Metal-binding</keyword>
<keyword id="KW-0547">Nucleotide-binding</keyword>
<keyword id="KW-0717">Septation</keyword>
<accession>A8EXG4</accession>
<comment type="function">
    <text evidence="1">Necessary for normal cell division and for the maintenance of normal septation.</text>
</comment>
<comment type="cofactor">
    <cofactor evidence="1">
        <name>Mg(2+)</name>
        <dbReference type="ChEBI" id="CHEBI:18420"/>
    </cofactor>
</comment>
<comment type="similarity">
    <text evidence="1">Belongs to the TRAFAC class TrmE-Era-EngA-EngB-Septin-like GTPase superfamily. EngB GTPase family.</text>
</comment>
<dbReference type="EMBL" id="CP000409">
    <property type="protein sequence ID" value="ABV73047.1"/>
    <property type="molecule type" value="Genomic_DNA"/>
</dbReference>
<dbReference type="RefSeq" id="WP_012148248.1">
    <property type="nucleotide sequence ID" value="NC_009879.1"/>
</dbReference>
<dbReference type="SMR" id="A8EXG4"/>
<dbReference type="STRING" id="293613.A1E_00485"/>
<dbReference type="KEGG" id="rcm:A1E_00485"/>
<dbReference type="eggNOG" id="COG0218">
    <property type="taxonomic scope" value="Bacteria"/>
</dbReference>
<dbReference type="HOGENOM" id="CLU_033732_2_0_5"/>
<dbReference type="Proteomes" id="UP000007056">
    <property type="component" value="Chromosome"/>
</dbReference>
<dbReference type="GO" id="GO:0005525">
    <property type="term" value="F:GTP binding"/>
    <property type="evidence" value="ECO:0007669"/>
    <property type="project" value="UniProtKB-UniRule"/>
</dbReference>
<dbReference type="GO" id="GO:0046872">
    <property type="term" value="F:metal ion binding"/>
    <property type="evidence" value="ECO:0007669"/>
    <property type="project" value="UniProtKB-KW"/>
</dbReference>
<dbReference type="GO" id="GO:0000917">
    <property type="term" value="P:division septum assembly"/>
    <property type="evidence" value="ECO:0007669"/>
    <property type="project" value="UniProtKB-KW"/>
</dbReference>
<dbReference type="CDD" id="cd01876">
    <property type="entry name" value="YihA_EngB"/>
    <property type="match status" value="1"/>
</dbReference>
<dbReference type="Gene3D" id="3.40.50.300">
    <property type="entry name" value="P-loop containing nucleotide triphosphate hydrolases"/>
    <property type="match status" value="1"/>
</dbReference>
<dbReference type="HAMAP" id="MF_00321">
    <property type="entry name" value="GTPase_EngB"/>
    <property type="match status" value="1"/>
</dbReference>
<dbReference type="InterPro" id="IPR030393">
    <property type="entry name" value="G_ENGB_dom"/>
</dbReference>
<dbReference type="InterPro" id="IPR006073">
    <property type="entry name" value="GTP-bd"/>
</dbReference>
<dbReference type="InterPro" id="IPR019987">
    <property type="entry name" value="GTP-bd_ribosome_bio_YsxC"/>
</dbReference>
<dbReference type="InterPro" id="IPR027417">
    <property type="entry name" value="P-loop_NTPase"/>
</dbReference>
<dbReference type="NCBIfam" id="TIGR03598">
    <property type="entry name" value="GTPase_YsxC"/>
    <property type="match status" value="1"/>
</dbReference>
<dbReference type="PANTHER" id="PTHR11649:SF13">
    <property type="entry name" value="ENGB-TYPE G DOMAIN-CONTAINING PROTEIN"/>
    <property type="match status" value="1"/>
</dbReference>
<dbReference type="PANTHER" id="PTHR11649">
    <property type="entry name" value="MSS1/TRME-RELATED GTP-BINDING PROTEIN"/>
    <property type="match status" value="1"/>
</dbReference>
<dbReference type="Pfam" id="PF01926">
    <property type="entry name" value="MMR_HSR1"/>
    <property type="match status" value="1"/>
</dbReference>
<dbReference type="SUPFAM" id="SSF52540">
    <property type="entry name" value="P-loop containing nucleoside triphosphate hydrolases"/>
    <property type="match status" value="1"/>
</dbReference>
<dbReference type="PROSITE" id="PS51706">
    <property type="entry name" value="G_ENGB"/>
    <property type="match status" value="1"/>
</dbReference>
<gene>
    <name evidence="1" type="primary">engB</name>
    <name type="ordered locus">A1E_00485</name>
</gene>
<evidence type="ECO:0000255" key="1">
    <source>
        <dbReference type="HAMAP-Rule" id="MF_00321"/>
    </source>
</evidence>
<protein>
    <recommendedName>
        <fullName evidence="1">Probable GTP-binding protein EngB</fullName>
    </recommendedName>
</protein>
<feature type="chain" id="PRO_1000005849" description="Probable GTP-binding protein EngB">
    <location>
        <begin position="1"/>
        <end position="219"/>
    </location>
</feature>
<feature type="domain" description="EngB-type G" evidence="1">
    <location>
        <begin position="40"/>
        <end position="212"/>
    </location>
</feature>
<feature type="binding site" evidence="1">
    <location>
        <begin position="48"/>
        <end position="55"/>
    </location>
    <ligand>
        <name>GTP</name>
        <dbReference type="ChEBI" id="CHEBI:37565"/>
    </ligand>
</feature>
<feature type="binding site" evidence="1">
    <location>
        <position position="55"/>
    </location>
    <ligand>
        <name>Mg(2+)</name>
        <dbReference type="ChEBI" id="CHEBI:18420"/>
    </ligand>
</feature>
<feature type="binding site" evidence="1">
    <location>
        <begin position="75"/>
        <end position="79"/>
    </location>
    <ligand>
        <name>GTP</name>
        <dbReference type="ChEBI" id="CHEBI:37565"/>
    </ligand>
</feature>
<feature type="binding site" evidence="1">
    <location>
        <position position="77"/>
    </location>
    <ligand>
        <name>Mg(2+)</name>
        <dbReference type="ChEBI" id="CHEBI:18420"/>
    </ligand>
</feature>
<feature type="binding site" evidence="1">
    <location>
        <begin position="93"/>
        <end position="96"/>
    </location>
    <ligand>
        <name>GTP</name>
        <dbReference type="ChEBI" id="CHEBI:37565"/>
    </ligand>
</feature>
<feature type="binding site" evidence="1">
    <location>
        <begin position="160"/>
        <end position="163"/>
    </location>
    <ligand>
        <name>GTP</name>
        <dbReference type="ChEBI" id="CHEBI:37565"/>
    </ligand>
</feature>
<feature type="binding site" evidence="1">
    <location>
        <begin position="191"/>
        <end position="193"/>
    </location>
    <ligand>
        <name>GTP</name>
        <dbReference type="ChEBI" id="CHEBI:37565"/>
    </ligand>
</feature>
<name>ENGB_RICCK</name>